<keyword id="KW-0030">Aminoacyl-tRNA synthetase</keyword>
<keyword id="KW-0067">ATP-binding</keyword>
<keyword id="KW-0963">Cytoplasm</keyword>
<keyword id="KW-0436">Ligase</keyword>
<keyword id="KW-0547">Nucleotide-binding</keyword>
<keyword id="KW-0648">Protein biosynthesis</keyword>
<sequence>MNTRVLTGITTTGTPHLGNYAGAIRPAIQASTQPGVDAFFFLADYHALIKCDDPARVARSRLELAATWLAAGLDPERVTFYRQSDIPEITELCWLLTCVTPKGLMNRAHAYKASVDQNAAKGVEPDDGVTMGLFSYPVLMAADILLFNANQVPVGRDQVQHLEMARDIAQRFNHLYGREFFVLPEVVIAEEVATLPGLDGRKMSKSYNNTIPLFEGGAAGLRNATQRIVTDSRLPGEPKDAEASHLYMLYRAFSTQQESMAFRRQLEEGMGWGDAKQALYERLERDLAPMRERYVELISNPGLIEDILQAGAAKARKLAQPLVRTLRDAVGLGALQPAAAKAAQPARKAAKDARFVSFRDEDGSFRFRLLAADGEELLCSVPFANPKEAGALMRRLQDEAPEQALRGHDDVSYAAWLDGKEVAYGPQAADAGARDALLAKAREALAQLAAA</sequence>
<reference key="1">
    <citation type="journal article" date="2003" name="Nat. Genet.">
        <title>Comparative analysis of the genome sequences of Bordetella pertussis, Bordetella parapertussis and Bordetella bronchiseptica.</title>
        <authorList>
            <person name="Parkhill J."/>
            <person name="Sebaihia M."/>
            <person name="Preston A."/>
            <person name="Murphy L.D."/>
            <person name="Thomson N.R."/>
            <person name="Harris D.E."/>
            <person name="Holden M.T.G."/>
            <person name="Churcher C.M."/>
            <person name="Bentley S.D."/>
            <person name="Mungall K.L."/>
            <person name="Cerdeno-Tarraga A.-M."/>
            <person name="Temple L."/>
            <person name="James K.D."/>
            <person name="Harris B."/>
            <person name="Quail M.A."/>
            <person name="Achtman M."/>
            <person name="Atkin R."/>
            <person name="Baker S."/>
            <person name="Basham D."/>
            <person name="Bason N."/>
            <person name="Cherevach I."/>
            <person name="Chillingworth T."/>
            <person name="Collins M."/>
            <person name="Cronin A."/>
            <person name="Davis P."/>
            <person name="Doggett J."/>
            <person name="Feltwell T."/>
            <person name="Goble A."/>
            <person name="Hamlin N."/>
            <person name="Hauser H."/>
            <person name="Holroyd S."/>
            <person name="Jagels K."/>
            <person name="Leather S."/>
            <person name="Moule S."/>
            <person name="Norberczak H."/>
            <person name="O'Neil S."/>
            <person name="Ormond D."/>
            <person name="Price C."/>
            <person name="Rabbinowitsch E."/>
            <person name="Rutter S."/>
            <person name="Sanders M."/>
            <person name="Saunders D."/>
            <person name="Seeger K."/>
            <person name="Sharp S."/>
            <person name="Simmonds M."/>
            <person name="Skelton J."/>
            <person name="Squares R."/>
            <person name="Squares S."/>
            <person name="Stevens K."/>
            <person name="Unwin L."/>
            <person name="Whitehead S."/>
            <person name="Barrell B.G."/>
            <person name="Maskell D.J."/>
        </authorList>
    </citation>
    <scope>NUCLEOTIDE SEQUENCE [LARGE SCALE GENOMIC DNA]</scope>
    <source>
        <strain>12822 / ATCC BAA-587 / NCTC 13253</strain>
    </source>
</reference>
<gene>
    <name evidence="1" type="primary">trpS</name>
    <name type="ordered locus">BPP3202</name>
</gene>
<accession>Q7W5T6</accession>
<comment type="function">
    <text evidence="1">Catalyzes the attachment of tryptophan to tRNA(Trp).</text>
</comment>
<comment type="catalytic activity">
    <reaction evidence="1">
        <text>tRNA(Trp) + L-tryptophan + ATP = L-tryptophyl-tRNA(Trp) + AMP + diphosphate + H(+)</text>
        <dbReference type="Rhea" id="RHEA:24080"/>
        <dbReference type="Rhea" id="RHEA-COMP:9671"/>
        <dbReference type="Rhea" id="RHEA-COMP:9705"/>
        <dbReference type="ChEBI" id="CHEBI:15378"/>
        <dbReference type="ChEBI" id="CHEBI:30616"/>
        <dbReference type="ChEBI" id="CHEBI:33019"/>
        <dbReference type="ChEBI" id="CHEBI:57912"/>
        <dbReference type="ChEBI" id="CHEBI:78442"/>
        <dbReference type="ChEBI" id="CHEBI:78535"/>
        <dbReference type="ChEBI" id="CHEBI:456215"/>
        <dbReference type="EC" id="6.1.1.2"/>
    </reaction>
</comment>
<comment type="subunit">
    <text evidence="1">Homodimer.</text>
</comment>
<comment type="subcellular location">
    <subcellularLocation>
        <location evidence="1">Cytoplasm</location>
    </subcellularLocation>
</comment>
<comment type="similarity">
    <text evidence="1">Belongs to the class-I aminoacyl-tRNA synthetase family.</text>
</comment>
<dbReference type="EC" id="6.1.1.2" evidence="1"/>
<dbReference type="EMBL" id="BX640432">
    <property type="protein sequence ID" value="CAE38487.1"/>
    <property type="molecule type" value="Genomic_DNA"/>
</dbReference>
<dbReference type="RefSeq" id="WP_010926868.1">
    <property type="nucleotide sequence ID" value="NC_002928.3"/>
</dbReference>
<dbReference type="SMR" id="Q7W5T6"/>
<dbReference type="GeneID" id="93204985"/>
<dbReference type="KEGG" id="bpa:BPP3202"/>
<dbReference type="HOGENOM" id="CLU_029244_5_1_4"/>
<dbReference type="Proteomes" id="UP000001421">
    <property type="component" value="Chromosome"/>
</dbReference>
<dbReference type="GO" id="GO:0005829">
    <property type="term" value="C:cytosol"/>
    <property type="evidence" value="ECO:0007669"/>
    <property type="project" value="TreeGrafter"/>
</dbReference>
<dbReference type="GO" id="GO:0005524">
    <property type="term" value="F:ATP binding"/>
    <property type="evidence" value="ECO:0007669"/>
    <property type="project" value="UniProtKB-UniRule"/>
</dbReference>
<dbReference type="GO" id="GO:0004830">
    <property type="term" value="F:tryptophan-tRNA ligase activity"/>
    <property type="evidence" value="ECO:0007669"/>
    <property type="project" value="UniProtKB-UniRule"/>
</dbReference>
<dbReference type="GO" id="GO:0006436">
    <property type="term" value="P:tryptophanyl-tRNA aminoacylation"/>
    <property type="evidence" value="ECO:0007669"/>
    <property type="project" value="UniProtKB-UniRule"/>
</dbReference>
<dbReference type="CDD" id="cd00806">
    <property type="entry name" value="TrpRS_core"/>
    <property type="match status" value="1"/>
</dbReference>
<dbReference type="FunFam" id="1.10.240.10:FF:000005">
    <property type="entry name" value="Tryptophan--tRNA ligase"/>
    <property type="match status" value="1"/>
</dbReference>
<dbReference type="FunFam" id="3.40.50.620:FF:000144">
    <property type="entry name" value="Tryptophan--tRNA ligase"/>
    <property type="match status" value="1"/>
</dbReference>
<dbReference type="Gene3D" id="2.30.29.80">
    <property type="match status" value="1"/>
</dbReference>
<dbReference type="Gene3D" id="3.40.50.620">
    <property type="entry name" value="HUPs"/>
    <property type="match status" value="1"/>
</dbReference>
<dbReference type="Gene3D" id="1.10.240.10">
    <property type="entry name" value="Tyrosyl-Transfer RNA Synthetase"/>
    <property type="match status" value="1"/>
</dbReference>
<dbReference type="HAMAP" id="MF_00140_B">
    <property type="entry name" value="Trp_tRNA_synth_B"/>
    <property type="match status" value="1"/>
</dbReference>
<dbReference type="InterPro" id="IPR002305">
    <property type="entry name" value="aa-tRNA-synth_Ic"/>
</dbReference>
<dbReference type="InterPro" id="IPR014729">
    <property type="entry name" value="Rossmann-like_a/b/a_fold"/>
</dbReference>
<dbReference type="InterPro" id="IPR002306">
    <property type="entry name" value="Trp-tRNA-ligase"/>
</dbReference>
<dbReference type="InterPro" id="IPR024109">
    <property type="entry name" value="Trp-tRNA-ligase_bac-type"/>
</dbReference>
<dbReference type="InterPro" id="IPR050203">
    <property type="entry name" value="Trp-tRNA_synthetase"/>
</dbReference>
<dbReference type="InterPro" id="IPR036913">
    <property type="entry name" value="YegP-like_sf"/>
</dbReference>
<dbReference type="NCBIfam" id="NF008923">
    <property type="entry name" value="PRK12284.1"/>
    <property type="match status" value="1"/>
</dbReference>
<dbReference type="NCBIfam" id="TIGR00233">
    <property type="entry name" value="trpS"/>
    <property type="match status" value="1"/>
</dbReference>
<dbReference type="PANTHER" id="PTHR43766">
    <property type="entry name" value="TRYPTOPHAN--TRNA LIGASE, MITOCHONDRIAL"/>
    <property type="match status" value="1"/>
</dbReference>
<dbReference type="PANTHER" id="PTHR43766:SF1">
    <property type="entry name" value="TRYPTOPHAN--TRNA LIGASE, MITOCHONDRIAL"/>
    <property type="match status" value="1"/>
</dbReference>
<dbReference type="Pfam" id="PF00579">
    <property type="entry name" value="tRNA-synt_1b"/>
    <property type="match status" value="1"/>
</dbReference>
<dbReference type="PRINTS" id="PR01039">
    <property type="entry name" value="TRNASYNTHTRP"/>
</dbReference>
<dbReference type="SUPFAM" id="SSF52374">
    <property type="entry name" value="Nucleotidylyl transferase"/>
    <property type="match status" value="1"/>
</dbReference>
<dbReference type="SUPFAM" id="SSF160113">
    <property type="entry name" value="YegP-like"/>
    <property type="match status" value="1"/>
</dbReference>
<protein>
    <recommendedName>
        <fullName evidence="1">Tryptophan--tRNA ligase</fullName>
        <ecNumber evidence="1">6.1.1.2</ecNumber>
    </recommendedName>
    <alternativeName>
        <fullName evidence="1">Tryptophanyl-tRNA synthetase</fullName>
        <shortName evidence="1">TrpRS</shortName>
    </alternativeName>
</protein>
<proteinExistence type="inferred from homology"/>
<feature type="chain" id="PRO_0000136605" description="Tryptophan--tRNA ligase">
    <location>
        <begin position="1"/>
        <end position="451"/>
    </location>
</feature>
<feature type="short sequence motif" description="'HIGH' region" evidence="1">
    <location>
        <begin position="11"/>
        <end position="19"/>
    </location>
</feature>
<feature type="short sequence motif" description="'KMSKS' region" evidence="1">
    <location>
        <begin position="202"/>
        <end position="206"/>
    </location>
</feature>
<feature type="binding site" evidence="1">
    <location>
        <begin position="10"/>
        <end position="12"/>
    </location>
    <ligand>
        <name>ATP</name>
        <dbReference type="ChEBI" id="CHEBI:30616"/>
    </ligand>
</feature>
<feature type="binding site" evidence="1">
    <location>
        <begin position="18"/>
        <end position="19"/>
    </location>
    <ligand>
        <name>ATP</name>
        <dbReference type="ChEBI" id="CHEBI:30616"/>
    </ligand>
</feature>
<feature type="binding site" evidence="1">
    <location>
        <position position="143"/>
    </location>
    <ligand>
        <name>L-tryptophan</name>
        <dbReference type="ChEBI" id="CHEBI:57912"/>
    </ligand>
</feature>
<feature type="binding site" evidence="1">
    <location>
        <begin position="155"/>
        <end position="157"/>
    </location>
    <ligand>
        <name>ATP</name>
        <dbReference type="ChEBI" id="CHEBI:30616"/>
    </ligand>
</feature>
<feature type="binding site" evidence="1">
    <location>
        <position position="195"/>
    </location>
    <ligand>
        <name>ATP</name>
        <dbReference type="ChEBI" id="CHEBI:30616"/>
    </ligand>
</feature>
<feature type="binding site" evidence="1">
    <location>
        <begin position="202"/>
        <end position="206"/>
    </location>
    <ligand>
        <name>ATP</name>
        <dbReference type="ChEBI" id="CHEBI:30616"/>
    </ligand>
</feature>
<organism>
    <name type="scientific">Bordetella parapertussis (strain 12822 / ATCC BAA-587 / NCTC 13253)</name>
    <dbReference type="NCBI Taxonomy" id="257311"/>
    <lineage>
        <taxon>Bacteria</taxon>
        <taxon>Pseudomonadati</taxon>
        <taxon>Pseudomonadota</taxon>
        <taxon>Betaproteobacteria</taxon>
        <taxon>Burkholderiales</taxon>
        <taxon>Alcaligenaceae</taxon>
        <taxon>Bordetella</taxon>
    </lineage>
</organism>
<evidence type="ECO:0000255" key="1">
    <source>
        <dbReference type="HAMAP-Rule" id="MF_00140"/>
    </source>
</evidence>
<name>SYW_BORPA</name>